<keyword id="KW-0108">Calcium channel impairing toxin</keyword>
<keyword id="KW-0165">Cleavage on pair of basic residues</keyword>
<keyword id="KW-1015">Disulfide bond</keyword>
<keyword id="KW-0872">Ion channel impairing toxin</keyword>
<keyword id="KW-0960">Knottin</keyword>
<keyword id="KW-0528">Neurotoxin</keyword>
<keyword id="KW-0638">Presynaptic neurotoxin</keyword>
<keyword id="KW-0964">Secreted</keyword>
<keyword id="KW-0732">Signal</keyword>
<keyword id="KW-0800">Toxin</keyword>
<keyword id="KW-1218">Voltage-gated calcium channel impairing toxin</keyword>
<organism>
    <name type="scientific">Conus ventricosus</name>
    <name type="common">Mediterranean cone</name>
    <dbReference type="NCBI Taxonomy" id="117992"/>
    <lineage>
        <taxon>Eukaryota</taxon>
        <taxon>Metazoa</taxon>
        <taxon>Spiralia</taxon>
        <taxon>Lophotrochozoa</taxon>
        <taxon>Mollusca</taxon>
        <taxon>Gastropoda</taxon>
        <taxon>Caenogastropoda</taxon>
        <taxon>Neogastropoda</taxon>
        <taxon>Conoidea</taxon>
        <taxon>Conidae</taxon>
        <taxon>Conus</taxon>
        <taxon>Lautoconus</taxon>
    </lineage>
</organism>
<protein>
    <recommendedName>
        <fullName>Omega-conotoxin-like VnMKLT1-0111</fullName>
    </recommendedName>
</protein>
<accession>Q9BPA5</accession>
<evidence type="ECO:0000250" key="1"/>
<evidence type="ECO:0000250" key="2">
    <source>
        <dbReference type="UniProtKB" id="Q26443"/>
    </source>
</evidence>
<evidence type="ECO:0000255" key="3"/>
<evidence type="ECO:0000305" key="4"/>
<comment type="function">
    <text evidence="1">Omega-conotoxins act at presynaptic membranes, they bind and block voltage-gated calcium channels (Cav).</text>
</comment>
<comment type="subcellular location">
    <subcellularLocation>
        <location evidence="1">Secreted</location>
    </subcellularLocation>
</comment>
<comment type="tissue specificity">
    <text>Expressed by the venom duct.</text>
</comment>
<comment type="domain">
    <text evidence="1">The presence of a 'disulfide through disulfide knot' structurally defines this protein as a knottin.</text>
</comment>
<comment type="domain">
    <text>The cysteine framework is VI/VII (C-C-CC-C-C).</text>
</comment>
<comment type="similarity">
    <text evidence="4">Belongs to the conotoxin O1 superfamily.</text>
</comment>
<proteinExistence type="evidence at transcript level"/>
<sequence>MKLTCMMIVAVLFLTAWTFVTADSRNGLEYLFPKAHYEMNPEASKLNKKRDCVAGGHFCGFPKIGGPCCSGWCFFVCA</sequence>
<dbReference type="EMBL" id="AF215032">
    <property type="protein sequence ID" value="AAG60460.1"/>
    <property type="molecule type" value="mRNA"/>
</dbReference>
<dbReference type="SMR" id="Q9BPA5"/>
<dbReference type="ConoServer" id="719">
    <property type="toxin name" value="Vn6.8 precursor"/>
</dbReference>
<dbReference type="GO" id="GO:0005576">
    <property type="term" value="C:extracellular region"/>
    <property type="evidence" value="ECO:0007669"/>
    <property type="project" value="UniProtKB-SubCell"/>
</dbReference>
<dbReference type="GO" id="GO:0044231">
    <property type="term" value="C:host cell presynaptic membrane"/>
    <property type="evidence" value="ECO:0007669"/>
    <property type="project" value="UniProtKB-KW"/>
</dbReference>
<dbReference type="GO" id="GO:0005246">
    <property type="term" value="F:calcium channel regulator activity"/>
    <property type="evidence" value="ECO:0007669"/>
    <property type="project" value="UniProtKB-KW"/>
</dbReference>
<dbReference type="GO" id="GO:0008200">
    <property type="term" value="F:ion channel inhibitor activity"/>
    <property type="evidence" value="ECO:0007669"/>
    <property type="project" value="InterPro"/>
</dbReference>
<dbReference type="GO" id="GO:0090729">
    <property type="term" value="F:toxin activity"/>
    <property type="evidence" value="ECO:0007669"/>
    <property type="project" value="UniProtKB-KW"/>
</dbReference>
<dbReference type="InterPro" id="IPR004214">
    <property type="entry name" value="Conotoxin"/>
</dbReference>
<dbReference type="InterPro" id="IPR012321">
    <property type="entry name" value="Conotoxin_omega-typ_CS"/>
</dbReference>
<dbReference type="Pfam" id="PF02950">
    <property type="entry name" value="Conotoxin"/>
    <property type="match status" value="1"/>
</dbReference>
<dbReference type="PROSITE" id="PS60004">
    <property type="entry name" value="OMEGA_CONOTOXIN"/>
    <property type="match status" value="1"/>
</dbReference>
<feature type="signal peptide" evidence="3">
    <location>
        <begin position="1"/>
        <end position="22"/>
    </location>
</feature>
<feature type="propeptide" id="PRO_0000404780" evidence="1">
    <location>
        <begin position="23"/>
        <end position="48"/>
    </location>
</feature>
<feature type="peptide" id="PRO_0000404781" description="Omega-conotoxin-like VnMKLT1-0111">
    <location>
        <begin position="51"/>
        <end position="78"/>
    </location>
</feature>
<feature type="disulfide bond" evidence="2">
    <location>
        <begin position="52"/>
        <end position="69"/>
    </location>
</feature>
<feature type="disulfide bond" evidence="2">
    <location>
        <begin position="59"/>
        <end position="73"/>
    </location>
</feature>
<feature type="disulfide bond" evidence="2">
    <location>
        <begin position="68"/>
        <end position="77"/>
    </location>
</feature>
<reference key="1">
    <citation type="journal article" date="2001" name="Mol. Biol. Evol.">
        <title>Mechanisms for evolving hypervariability: the case of conopeptides.</title>
        <authorList>
            <person name="Conticello S.G."/>
            <person name="Gilad Y."/>
            <person name="Avidan N."/>
            <person name="Ben-Asher E."/>
            <person name="Levy Z."/>
            <person name="Fainzilber M."/>
        </authorList>
    </citation>
    <scope>NUCLEOTIDE SEQUENCE [MRNA]</scope>
    <source>
        <tissue>Venom duct</tissue>
    </source>
</reference>
<name>O168_CONVE</name>